<name>ASP1_ORYSI</name>
<comment type="function">
    <text evidence="4">Possesses protease activity in vitro.</text>
</comment>
<comment type="tissue specificity">
    <text evidence="4">Expressed in pollen, nucellus, ovary wall, shoot and root meristem, coleoptiles of immature seeds, and somatic embryos.</text>
</comment>
<comment type="developmental stage">
    <text evidence="4">Abundantly expressed in zygotic embryos 1 and 2 days after fertilization.</text>
</comment>
<comment type="similarity">
    <text evidence="5">Belongs to the peptidase A1 family.</text>
</comment>
<proteinExistence type="evidence at transcript level"/>
<organism>
    <name type="scientific">Oryza sativa subsp. indica</name>
    <name type="common">Rice</name>
    <dbReference type="NCBI Taxonomy" id="39946"/>
    <lineage>
        <taxon>Eukaryota</taxon>
        <taxon>Viridiplantae</taxon>
        <taxon>Streptophyta</taxon>
        <taxon>Embryophyta</taxon>
        <taxon>Tracheophyta</taxon>
        <taxon>Spermatophyta</taxon>
        <taxon>Magnoliopsida</taxon>
        <taxon>Liliopsida</taxon>
        <taxon>Poales</taxon>
        <taxon>Poaceae</taxon>
        <taxon>BOP clade</taxon>
        <taxon>Oryzoideae</taxon>
        <taxon>Oryzeae</taxon>
        <taxon>Oryzinae</taxon>
        <taxon>Oryza</taxon>
        <taxon>Oryza sativa</taxon>
    </lineage>
</organism>
<keyword id="KW-0064">Aspartyl protease</keyword>
<keyword id="KW-0378">Hydrolase</keyword>
<keyword id="KW-0645">Protease</keyword>
<keyword id="KW-1185">Reference proteome</keyword>
<keyword id="KW-0677">Repeat</keyword>
<keyword id="KW-0732">Signal</keyword>
<protein>
    <recommendedName>
        <fullName>Aspartic proteinase Asp1</fullName>
        <shortName>OSAP1</shortName>
        <shortName>OsAsp1</shortName>
        <ecNumber>3.4.23.-</ecNumber>
    </recommendedName>
    <alternativeName>
        <fullName>Nucellin-like protein</fullName>
    </alternativeName>
</protein>
<evidence type="ECO:0000255" key="1"/>
<evidence type="ECO:0000255" key="2">
    <source>
        <dbReference type="PROSITE-ProRule" id="PRU01103"/>
    </source>
</evidence>
<evidence type="ECO:0000255" key="3">
    <source>
        <dbReference type="PROSITE-ProRule" id="PRU10094"/>
    </source>
</evidence>
<evidence type="ECO:0000269" key="4">
    <source>
    </source>
</evidence>
<evidence type="ECO:0000305" key="5"/>
<gene>
    <name type="primary">ASP1</name>
    <name type="ORF">OsI_034160</name>
</gene>
<feature type="signal peptide" evidence="1">
    <location>
        <begin position="1"/>
        <end position="23"/>
    </location>
</feature>
<feature type="propeptide" id="PRO_0000301660" description="Removed in mature form" evidence="1">
    <location>
        <begin position="24"/>
        <end position="46"/>
    </location>
</feature>
<feature type="chain" id="PRO_0000301661" description="Aspartic proteinase Asp1">
    <location>
        <begin position="47"/>
        <end position="410"/>
    </location>
</feature>
<feature type="domain" description="Peptidase A1" evidence="2">
    <location>
        <begin position="38"/>
        <end position="392"/>
    </location>
</feature>
<feature type="active site" evidence="3">
    <location>
        <position position="56"/>
    </location>
</feature>
<feature type="active site" evidence="3">
    <location>
        <position position="257"/>
    </location>
</feature>
<feature type="sequence conflict" description="In Ref. 1; AAK81698/AAK81699." evidence="5" ref="1">
    <original>G</original>
    <variation>S</variation>
    <location>
        <position position="45"/>
    </location>
</feature>
<feature type="sequence conflict" description="In Ref. 1; AAK81698/AAK81699." evidence="5" ref="1">
    <original>Q</original>
    <variation>H</variation>
    <location>
        <position position="239"/>
    </location>
</feature>
<feature type="sequence conflict" description="In Ref. 1; AAK81699." evidence="5" ref="1">
    <original>SK</original>
    <variation>KQS</variation>
    <location>
        <begin position="244"/>
        <end position="245"/>
    </location>
</feature>
<dbReference type="EC" id="3.4.23.-"/>
<dbReference type="EMBL" id="AY043216">
    <property type="protein sequence ID" value="AAK81698.1"/>
    <property type="molecule type" value="Genomic_DNA"/>
</dbReference>
<dbReference type="EMBL" id="AY043217">
    <property type="protein sequence ID" value="AAK81699.1"/>
    <property type="molecule type" value="mRNA"/>
</dbReference>
<dbReference type="EMBL" id="CM000136">
    <property type="status" value="NOT_ANNOTATED_CDS"/>
    <property type="molecule type" value="Genomic_DNA"/>
</dbReference>
<dbReference type="SMR" id="A2ZC67"/>
<dbReference type="STRING" id="39946.A2ZC67"/>
<dbReference type="MEROPS" id="A01.073"/>
<dbReference type="Proteomes" id="UP000007015">
    <property type="component" value="Chromosome 11"/>
</dbReference>
<dbReference type="GO" id="GO:0004190">
    <property type="term" value="F:aspartic-type endopeptidase activity"/>
    <property type="evidence" value="ECO:0007669"/>
    <property type="project" value="UniProtKB-KW"/>
</dbReference>
<dbReference type="GO" id="GO:0006508">
    <property type="term" value="P:proteolysis"/>
    <property type="evidence" value="ECO:0007669"/>
    <property type="project" value="UniProtKB-KW"/>
</dbReference>
<dbReference type="CDD" id="cd05475">
    <property type="entry name" value="nucellin_like"/>
    <property type="match status" value="1"/>
</dbReference>
<dbReference type="FunFam" id="2.40.70.10:FF:000027">
    <property type="entry name" value="Aspartic proteinase Asp1 isoform A"/>
    <property type="match status" value="1"/>
</dbReference>
<dbReference type="FunFam" id="2.40.70.10:FF:000015">
    <property type="entry name" value="Aspartyl protease family protein"/>
    <property type="match status" value="1"/>
</dbReference>
<dbReference type="Gene3D" id="2.40.70.10">
    <property type="entry name" value="Acid Proteases"/>
    <property type="match status" value="2"/>
</dbReference>
<dbReference type="InterPro" id="IPR001461">
    <property type="entry name" value="Aspartic_peptidase_A1"/>
</dbReference>
<dbReference type="InterPro" id="IPR001969">
    <property type="entry name" value="Aspartic_peptidase_AS"/>
</dbReference>
<dbReference type="InterPro" id="IPR033823">
    <property type="entry name" value="Nucellin"/>
</dbReference>
<dbReference type="InterPro" id="IPR033121">
    <property type="entry name" value="PEPTIDASE_A1"/>
</dbReference>
<dbReference type="InterPro" id="IPR021109">
    <property type="entry name" value="Peptidase_aspartic_dom_sf"/>
</dbReference>
<dbReference type="InterPro" id="IPR032799">
    <property type="entry name" value="TAXi_C"/>
</dbReference>
<dbReference type="InterPro" id="IPR032861">
    <property type="entry name" value="TAXi_N"/>
</dbReference>
<dbReference type="PANTHER" id="PTHR13683:SF331">
    <property type="entry name" value="ASPARTIC PROTEINASE ASP1"/>
    <property type="match status" value="1"/>
</dbReference>
<dbReference type="PANTHER" id="PTHR13683">
    <property type="entry name" value="ASPARTYL PROTEASES"/>
    <property type="match status" value="1"/>
</dbReference>
<dbReference type="Pfam" id="PF14541">
    <property type="entry name" value="TAXi_C"/>
    <property type="match status" value="1"/>
</dbReference>
<dbReference type="Pfam" id="PF14543">
    <property type="entry name" value="TAXi_N"/>
    <property type="match status" value="1"/>
</dbReference>
<dbReference type="SUPFAM" id="SSF50630">
    <property type="entry name" value="Acid proteases"/>
    <property type="match status" value="1"/>
</dbReference>
<dbReference type="PROSITE" id="PS00141">
    <property type="entry name" value="ASP_PROTEASE"/>
    <property type="match status" value="2"/>
</dbReference>
<dbReference type="PROSITE" id="PS51767">
    <property type="entry name" value="PEPTIDASE_A1"/>
    <property type="match status" value="1"/>
</dbReference>
<sequence length="410" mass="44961">MTARLALLASLLLLLQLVPPSSAVVLELHGNVYPIGHFFVTMNIGDPAKPYFLDIDTGSTLTWLQCDYPCINCNKVPHGLYKPELKYAVKCTEQRCADLYADLRKPMKCGPKNQCHYGIQYVGGSSIGVLIVDSFSLPASNGTNPTSIAFGCGYNQGKNNHNVPTPVNGILGLGRGKVTLLSQLKSQGVITKHVLGHCISSKGKGFLFFGDAKVPTSGVTWSPMNREHKHYSPRQGTLQFNSNSKPISAAPMEVIFDSGATYTYFALQPYHATLSVVKSTLSKECKFLTEVKEKDRALTVCWKGKDKIRTIDEVKKCFRSLSLKFADGDKKATLEIPPEHYLIISQEGHVCLGILDGSKEHPSLAGTNLIGGITMLDQMVIYDSERSLLGWVNYQCDRIPRSASAITSRL</sequence>
<reference key="1">
    <citation type="journal article" date="2005" name="Plant Cell Physiol.">
        <title>The rice nucellin gene ortholog OsAsp1 encodes an active aspartic protease without a plant-specific insert and is strongly expressed in early embryo.</title>
        <authorList>
            <person name="Bi X."/>
            <person name="Khush G.S."/>
            <person name="Bennett J."/>
        </authorList>
    </citation>
    <scope>NUCLEOTIDE SEQUENCE [GENOMIC DNA / MRNA]</scope>
    <scope>FUNCTION</scope>
    <scope>TISSUE SPECIFICITY</scope>
    <scope>DEVELOPMENTAL STAGE</scope>
    <source>
        <strain>cv. IR64</strain>
    </source>
</reference>
<reference key="2">
    <citation type="journal article" date="2005" name="PLoS Biol.">
        <title>The genomes of Oryza sativa: a history of duplications.</title>
        <authorList>
            <person name="Yu J."/>
            <person name="Wang J."/>
            <person name="Lin W."/>
            <person name="Li S."/>
            <person name="Li H."/>
            <person name="Zhou J."/>
            <person name="Ni P."/>
            <person name="Dong W."/>
            <person name="Hu S."/>
            <person name="Zeng C."/>
            <person name="Zhang J."/>
            <person name="Zhang Y."/>
            <person name="Li R."/>
            <person name="Xu Z."/>
            <person name="Li S."/>
            <person name="Li X."/>
            <person name="Zheng H."/>
            <person name="Cong L."/>
            <person name="Lin L."/>
            <person name="Yin J."/>
            <person name="Geng J."/>
            <person name="Li G."/>
            <person name="Shi J."/>
            <person name="Liu J."/>
            <person name="Lv H."/>
            <person name="Li J."/>
            <person name="Wang J."/>
            <person name="Deng Y."/>
            <person name="Ran L."/>
            <person name="Shi X."/>
            <person name="Wang X."/>
            <person name="Wu Q."/>
            <person name="Li C."/>
            <person name="Ren X."/>
            <person name="Wang J."/>
            <person name="Wang X."/>
            <person name="Li D."/>
            <person name="Liu D."/>
            <person name="Zhang X."/>
            <person name="Ji Z."/>
            <person name="Zhao W."/>
            <person name="Sun Y."/>
            <person name="Zhang Z."/>
            <person name="Bao J."/>
            <person name="Han Y."/>
            <person name="Dong L."/>
            <person name="Ji J."/>
            <person name="Chen P."/>
            <person name="Wu S."/>
            <person name="Liu J."/>
            <person name="Xiao Y."/>
            <person name="Bu D."/>
            <person name="Tan J."/>
            <person name="Yang L."/>
            <person name="Ye C."/>
            <person name="Zhang J."/>
            <person name="Xu J."/>
            <person name="Zhou Y."/>
            <person name="Yu Y."/>
            <person name="Zhang B."/>
            <person name="Zhuang S."/>
            <person name="Wei H."/>
            <person name="Liu B."/>
            <person name="Lei M."/>
            <person name="Yu H."/>
            <person name="Li Y."/>
            <person name="Xu H."/>
            <person name="Wei S."/>
            <person name="He X."/>
            <person name="Fang L."/>
            <person name="Zhang Z."/>
            <person name="Zhang Y."/>
            <person name="Huang X."/>
            <person name="Su Z."/>
            <person name="Tong W."/>
            <person name="Li J."/>
            <person name="Tong Z."/>
            <person name="Li S."/>
            <person name="Ye J."/>
            <person name="Wang L."/>
            <person name="Fang L."/>
            <person name="Lei T."/>
            <person name="Chen C.-S."/>
            <person name="Chen H.-C."/>
            <person name="Xu Z."/>
            <person name="Li H."/>
            <person name="Huang H."/>
            <person name="Zhang F."/>
            <person name="Xu H."/>
            <person name="Li N."/>
            <person name="Zhao C."/>
            <person name="Li S."/>
            <person name="Dong L."/>
            <person name="Huang Y."/>
            <person name="Li L."/>
            <person name="Xi Y."/>
            <person name="Qi Q."/>
            <person name="Li W."/>
            <person name="Zhang B."/>
            <person name="Hu W."/>
            <person name="Zhang Y."/>
            <person name="Tian X."/>
            <person name="Jiao Y."/>
            <person name="Liang X."/>
            <person name="Jin J."/>
            <person name="Gao L."/>
            <person name="Zheng W."/>
            <person name="Hao B."/>
            <person name="Liu S.-M."/>
            <person name="Wang W."/>
            <person name="Yuan L."/>
            <person name="Cao M."/>
            <person name="McDermott J."/>
            <person name="Samudrala R."/>
            <person name="Wang J."/>
            <person name="Wong G.K.-S."/>
            <person name="Yang H."/>
        </authorList>
    </citation>
    <scope>NUCLEOTIDE SEQUENCE [LARGE SCALE GENOMIC DNA]</scope>
    <source>
        <strain>cv. 93-11</strain>
    </source>
</reference>
<accession>A2ZC67</accession>
<accession>Q53NF8</accession>
<accession>Q6YNY7</accession>
<accession>Q6YNY8</accession>
<accession>Q71SA7</accession>